<dbReference type="EC" id="2.1.1.-" evidence="1"/>
<dbReference type="EC" id="2.1.1.35" evidence="1"/>
<dbReference type="EMBL" id="CP000472">
    <property type="protein sequence ID" value="ACJ27049.1"/>
    <property type="status" value="ALT_INIT"/>
    <property type="molecule type" value="Genomic_DNA"/>
</dbReference>
<dbReference type="RefSeq" id="WP_044555527.1">
    <property type="nucleotide sequence ID" value="NC_011566.1"/>
</dbReference>
<dbReference type="SMR" id="B8CH56"/>
<dbReference type="STRING" id="225849.swp_0206"/>
<dbReference type="KEGG" id="swp:swp_0206"/>
<dbReference type="eggNOG" id="COG2265">
    <property type="taxonomic scope" value="Bacteria"/>
</dbReference>
<dbReference type="HOGENOM" id="CLU_043022_0_0_6"/>
<dbReference type="OrthoDB" id="9804590at2"/>
<dbReference type="Proteomes" id="UP000000753">
    <property type="component" value="Chromosome"/>
</dbReference>
<dbReference type="GO" id="GO:0005829">
    <property type="term" value="C:cytosol"/>
    <property type="evidence" value="ECO:0007669"/>
    <property type="project" value="TreeGrafter"/>
</dbReference>
<dbReference type="GO" id="GO:0019843">
    <property type="term" value="F:rRNA binding"/>
    <property type="evidence" value="ECO:0007669"/>
    <property type="project" value="TreeGrafter"/>
</dbReference>
<dbReference type="GO" id="GO:0030697">
    <property type="term" value="F:tRNA (uracil(54)-C5)-methyltransferase activity, S-adenosyl methionine-dependent"/>
    <property type="evidence" value="ECO:0007669"/>
    <property type="project" value="UniProtKB-UniRule"/>
</dbReference>
<dbReference type="GO" id="GO:0000049">
    <property type="term" value="F:tRNA binding"/>
    <property type="evidence" value="ECO:0007669"/>
    <property type="project" value="TreeGrafter"/>
</dbReference>
<dbReference type="GO" id="GO:0030488">
    <property type="term" value="P:tRNA methylation"/>
    <property type="evidence" value="ECO:0007669"/>
    <property type="project" value="UniProtKB-UniRule"/>
</dbReference>
<dbReference type="CDD" id="cd02440">
    <property type="entry name" value="AdoMet_MTases"/>
    <property type="match status" value="1"/>
</dbReference>
<dbReference type="FunFam" id="2.40.50.1070:FF:000001">
    <property type="entry name" value="tRNA/tmRNA (uracil-C(5))-methyltransferase"/>
    <property type="match status" value="1"/>
</dbReference>
<dbReference type="FunFam" id="3.40.50.150:FF:000012">
    <property type="entry name" value="tRNA/tmRNA (uracil-C(5))-methyltransferase"/>
    <property type="match status" value="1"/>
</dbReference>
<dbReference type="Gene3D" id="2.40.50.1070">
    <property type="match status" value="1"/>
</dbReference>
<dbReference type="Gene3D" id="3.40.50.150">
    <property type="entry name" value="Vaccinia Virus protein VP39"/>
    <property type="match status" value="1"/>
</dbReference>
<dbReference type="HAMAP" id="MF_01011">
    <property type="entry name" value="RNA_methyltr_TrmA"/>
    <property type="match status" value="1"/>
</dbReference>
<dbReference type="InterPro" id="IPR030390">
    <property type="entry name" value="MeTrfase_TrmA_AS"/>
</dbReference>
<dbReference type="InterPro" id="IPR030391">
    <property type="entry name" value="MeTrfase_TrmA_CS"/>
</dbReference>
<dbReference type="InterPro" id="IPR029063">
    <property type="entry name" value="SAM-dependent_MTases_sf"/>
</dbReference>
<dbReference type="InterPro" id="IPR011869">
    <property type="entry name" value="TrmA_MeTrfase"/>
</dbReference>
<dbReference type="InterPro" id="IPR010280">
    <property type="entry name" value="U5_MeTrfase_fam"/>
</dbReference>
<dbReference type="NCBIfam" id="TIGR02143">
    <property type="entry name" value="trmA_only"/>
    <property type="match status" value="1"/>
</dbReference>
<dbReference type="PANTHER" id="PTHR47790">
    <property type="entry name" value="TRNA/TMRNA (URACIL-C(5))-METHYLTRANSFERASE"/>
    <property type="match status" value="1"/>
</dbReference>
<dbReference type="PANTHER" id="PTHR47790:SF2">
    <property type="entry name" value="TRNA_TMRNA (URACIL-C(5))-METHYLTRANSFERASE"/>
    <property type="match status" value="1"/>
</dbReference>
<dbReference type="Pfam" id="PF05958">
    <property type="entry name" value="tRNA_U5-meth_tr"/>
    <property type="match status" value="1"/>
</dbReference>
<dbReference type="SUPFAM" id="SSF53335">
    <property type="entry name" value="S-adenosyl-L-methionine-dependent methyltransferases"/>
    <property type="match status" value="1"/>
</dbReference>
<dbReference type="PROSITE" id="PS51687">
    <property type="entry name" value="SAM_MT_RNA_M5U"/>
    <property type="match status" value="1"/>
</dbReference>
<dbReference type="PROSITE" id="PS01230">
    <property type="entry name" value="TRMA_1"/>
    <property type="match status" value="1"/>
</dbReference>
<dbReference type="PROSITE" id="PS01231">
    <property type="entry name" value="TRMA_2"/>
    <property type="match status" value="1"/>
</dbReference>
<organism>
    <name type="scientific">Shewanella piezotolerans (strain WP3 / JCM 13877)</name>
    <dbReference type="NCBI Taxonomy" id="225849"/>
    <lineage>
        <taxon>Bacteria</taxon>
        <taxon>Pseudomonadati</taxon>
        <taxon>Pseudomonadota</taxon>
        <taxon>Gammaproteobacteria</taxon>
        <taxon>Alteromonadales</taxon>
        <taxon>Shewanellaceae</taxon>
        <taxon>Shewanella</taxon>
    </lineage>
</organism>
<accession>B8CH56</accession>
<reference key="1">
    <citation type="journal article" date="2008" name="PLoS ONE">
        <title>Environmental adaptation: genomic analysis of the piezotolerant and psychrotolerant deep-sea iron reducing bacterium Shewanella piezotolerans WP3.</title>
        <authorList>
            <person name="Wang F."/>
            <person name="Wang J."/>
            <person name="Jian H."/>
            <person name="Zhang B."/>
            <person name="Li S."/>
            <person name="Wang F."/>
            <person name="Zeng X."/>
            <person name="Gao L."/>
            <person name="Bartlett D.H."/>
            <person name="Yu J."/>
            <person name="Hu S."/>
            <person name="Xiao X."/>
        </authorList>
    </citation>
    <scope>NUCLEOTIDE SEQUENCE [LARGE SCALE GENOMIC DNA]</scope>
    <source>
        <strain>WP3 / JCM 13877</strain>
    </source>
</reference>
<name>TRMA_SHEPW</name>
<comment type="function">
    <text evidence="1">Dual-specificity methyltransferase that catalyzes the formation of 5-methyluridine at position 54 (m5U54) in all tRNAs, and that of position 341 (m5U341) in tmRNA (transfer-mRNA).</text>
</comment>
<comment type="catalytic activity">
    <reaction evidence="1">
        <text>uridine(54) in tRNA + S-adenosyl-L-methionine = 5-methyluridine(54) in tRNA + S-adenosyl-L-homocysteine + H(+)</text>
        <dbReference type="Rhea" id="RHEA:42712"/>
        <dbReference type="Rhea" id="RHEA-COMP:10167"/>
        <dbReference type="Rhea" id="RHEA-COMP:10193"/>
        <dbReference type="ChEBI" id="CHEBI:15378"/>
        <dbReference type="ChEBI" id="CHEBI:57856"/>
        <dbReference type="ChEBI" id="CHEBI:59789"/>
        <dbReference type="ChEBI" id="CHEBI:65315"/>
        <dbReference type="ChEBI" id="CHEBI:74447"/>
        <dbReference type="EC" id="2.1.1.35"/>
    </reaction>
</comment>
<comment type="catalytic activity">
    <reaction evidence="1">
        <text>uridine(341) in tmRNA + S-adenosyl-L-methionine = 5-methyluridine(341) in tmRNA + S-adenosyl-L-homocysteine + H(+)</text>
        <dbReference type="Rhea" id="RHEA:43612"/>
        <dbReference type="Rhea" id="RHEA-COMP:10630"/>
        <dbReference type="Rhea" id="RHEA-COMP:10631"/>
        <dbReference type="ChEBI" id="CHEBI:15378"/>
        <dbReference type="ChEBI" id="CHEBI:57856"/>
        <dbReference type="ChEBI" id="CHEBI:59789"/>
        <dbReference type="ChEBI" id="CHEBI:65315"/>
        <dbReference type="ChEBI" id="CHEBI:74447"/>
    </reaction>
</comment>
<comment type="similarity">
    <text evidence="1">Belongs to the class I-like SAM-binding methyltransferase superfamily. RNA M5U methyltransferase family. TrmA subfamily.</text>
</comment>
<comment type="sequence caution" evidence="2">
    <conflict type="erroneous initiation">
        <sequence resource="EMBL-CDS" id="ACJ27049"/>
    </conflict>
    <text>Truncated N-terminus.</text>
</comment>
<proteinExistence type="inferred from homology"/>
<feature type="chain" id="PRO_0000388566" description="tRNA/tmRNA (uracil-C(5))-methyltransferase">
    <location>
        <begin position="1"/>
        <end position="365"/>
    </location>
</feature>
<feature type="active site" description="Nucleophile" evidence="1">
    <location>
        <position position="323"/>
    </location>
</feature>
<feature type="active site" description="Proton acceptor" evidence="1">
    <location>
        <position position="357"/>
    </location>
</feature>
<feature type="binding site" evidence="1">
    <location>
        <position position="189"/>
    </location>
    <ligand>
        <name>S-adenosyl-L-methionine</name>
        <dbReference type="ChEBI" id="CHEBI:59789"/>
    </ligand>
</feature>
<feature type="binding site" evidence="1">
    <location>
        <position position="217"/>
    </location>
    <ligand>
        <name>S-adenosyl-L-methionine</name>
        <dbReference type="ChEBI" id="CHEBI:59789"/>
    </ligand>
</feature>
<feature type="binding site" evidence="1">
    <location>
        <position position="222"/>
    </location>
    <ligand>
        <name>S-adenosyl-L-methionine</name>
        <dbReference type="ChEBI" id="CHEBI:59789"/>
    </ligand>
</feature>
<feature type="binding site" evidence="1">
    <location>
        <position position="238"/>
    </location>
    <ligand>
        <name>S-adenosyl-L-methionine</name>
        <dbReference type="ChEBI" id="CHEBI:59789"/>
    </ligand>
</feature>
<feature type="binding site" evidence="1">
    <location>
        <position position="298"/>
    </location>
    <ligand>
        <name>S-adenosyl-L-methionine</name>
        <dbReference type="ChEBI" id="CHEBI:59789"/>
    </ligand>
</feature>
<evidence type="ECO:0000255" key="1">
    <source>
        <dbReference type="HAMAP-Rule" id="MF_01011"/>
    </source>
</evidence>
<evidence type="ECO:0000305" key="2"/>
<sequence>MNLAAMDPLTYDVQLEAKRVKLKQLFTDFDTPELESFSSETAHYRMRAEFRMWHEGEDLYYYMFDKELNSKVRCDQFLPASELINKMMPVLVELLKPNTILRHRLFQIDFLSTLSGEILVSLLYHKQLDAEWEEQAKILKQTLSSQFNVNLIGRARKQKLIFDKDFVVESLNVAGKQLQYHQIENSFTQPNGKVSVKMLEWAIDVTKNSTGDLLELYCGNGNFSIALAQNFERVLATELAKPSVESAQYNIKMNHVDNLQIIRMSAEDFTDAMAKKRSYRRLEGIDLDSYNCNTIFVDPPRAGLDENTVKLVQGYERIVYISCNPNTLLDNLKELSKTHNITRFVLFDQFPYTDHMESGVFLEKK</sequence>
<keyword id="KW-0489">Methyltransferase</keyword>
<keyword id="KW-0949">S-adenosyl-L-methionine</keyword>
<keyword id="KW-0808">Transferase</keyword>
<keyword id="KW-0819">tRNA processing</keyword>
<gene>
    <name evidence="1" type="primary">trmA</name>
    <name type="ordered locus">swp_0206</name>
</gene>
<protein>
    <recommendedName>
        <fullName evidence="1">tRNA/tmRNA (uracil-C(5))-methyltransferase</fullName>
        <ecNumber evidence="1">2.1.1.-</ecNumber>
        <ecNumber evidence="1">2.1.1.35</ecNumber>
    </recommendedName>
    <alternativeName>
        <fullName evidence="1">tRNA (uracil(54)-C(5))-methyltransferase</fullName>
    </alternativeName>
    <alternativeName>
        <fullName evidence="1">tRNA(m5U54)-methyltransferase</fullName>
        <shortName evidence="1">RUMT</shortName>
    </alternativeName>
    <alternativeName>
        <fullName evidence="1">tmRNA (uracil(341)-C(5))-methyltransferase</fullName>
    </alternativeName>
</protein>